<comment type="function">
    <text evidence="1">Redox regulated molecular chaperone. Protects both thermally unfolding and oxidatively damaged proteins from irreversible aggregation. Plays an important role in the bacterial defense system toward oxidative stress.</text>
</comment>
<comment type="subcellular location">
    <subcellularLocation>
        <location evidence="1">Cytoplasm</location>
    </subcellularLocation>
</comment>
<comment type="PTM">
    <text evidence="1">Under oxidizing conditions two disulfide bonds are formed involving the reactive cysteines. Under reducing conditions zinc is bound to the reactive cysteines and the protein is inactive.</text>
</comment>
<comment type="similarity">
    <text evidence="1">Belongs to the HSP33 family.</text>
</comment>
<dbReference type="EMBL" id="CP000094">
    <property type="protein sequence ID" value="ABA72011.1"/>
    <property type="molecule type" value="Genomic_DNA"/>
</dbReference>
<dbReference type="RefSeq" id="WP_011331968.1">
    <property type="nucleotide sequence ID" value="NC_007492.2"/>
</dbReference>
<dbReference type="SMR" id="Q3KJP5"/>
<dbReference type="KEGG" id="pfo:Pfl01_0267"/>
<dbReference type="eggNOG" id="COG1281">
    <property type="taxonomic scope" value="Bacteria"/>
</dbReference>
<dbReference type="HOGENOM" id="CLU_054493_0_0_6"/>
<dbReference type="Proteomes" id="UP000002704">
    <property type="component" value="Chromosome"/>
</dbReference>
<dbReference type="GO" id="GO:0005737">
    <property type="term" value="C:cytoplasm"/>
    <property type="evidence" value="ECO:0007669"/>
    <property type="project" value="UniProtKB-SubCell"/>
</dbReference>
<dbReference type="GO" id="GO:0044183">
    <property type="term" value="F:protein folding chaperone"/>
    <property type="evidence" value="ECO:0007669"/>
    <property type="project" value="TreeGrafter"/>
</dbReference>
<dbReference type="GO" id="GO:0051082">
    <property type="term" value="F:unfolded protein binding"/>
    <property type="evidence" value="ECO:0007669"/>
    <property type="project" value="UniProtKB-UniRule"/>
</dbReference>
<dbReference type="GO" id="GO:0042026">
    <property type="term" value="P:protein refolding"/>
    <property type="evidence" value="ECO:0007669"/>
    <property type="project" value="TreeGrafter"/>
</dbReference>
<dbReference type="CDD" id="cd00498">
    <property type="entry name" value="Hsp33"/>
    <property type="match status" value="1"/>
</dbReference>
<dbReference type="Gene3D" id="1.10.287.480">
    <property type="entry name" value="helix hairpin bin"/>
    <property type="match status" value="1"/>
</dbReference>
<dbReference type="Gene3D" id="3.55.30.10">
    <property type="entry name" value="Hsp33 domain"/>
    <property type="match status" value="1"/>
</dbReference>
<dbReference type="Gene3D" id="3.90.1280.10">
    <property type="entry name" value="HSP33 redox switch-like"/>
    <property type="match status" value="1"/>
</dbReference>
<dbReference type="HAMAP" id="MF_00117">
    <property type="entry name" value="HslO"/>
    <property type="match status" value="1"/>
</dbReference>
<dbReference type="InterPro" id="IPR000397">
    <property type="entry name" value="Heat_shock_Hsp33"/>
</dbReference>
<dbReference type="InterPro" id="IPR016154">
    <property type="entry name" value="Heat_shock_Hsp33_C"/>
</dbReference>
<dbReference type="InterPro" id="IPR016153">
    <property type="entry name" value="Heat_shock_Hsp33_N"/>
</dbReference>
<dbReference type="InterPro" id="IPR023212">
    <property type="entry name" value="Hsp33_helix_hairpin_bin_dom_sf"/>
</dbReference>
<dbReference type="NCBIfam" id="NF001033">
    <property type="entry name" value="PRK00114.1"/>
    <property type="match status" value="1"/>
</dbReference>
<dbReference type="PANTHER" id="PTHR30111">
    <property type="entry name" value="33 KDA CHAPERONIN"/>
    <property type="match status" value="1"/>
</dbReference>
<dbReference type="PANTHER" id="PTHR30111:SF1">
    <property type="entry name" value="33 KDA CHAPERONIN"/>
    <property type="match status" value="1"/>
</dbReference>
<dbReference type="Pfam" id="PF01430">
    <property type="entry name" value="HSP33"/>
    <property type="match status" value="1"/>
</dbReference>
<dbReference type="PIRSF" id="PIRSF005261">
    <property type="entry name" value="Heat_shock_Hsp33"/>
    <property type="match status" value="1"/>
</dbReference>
<dbReference type="SUPFAM" id="SSF64397">
    <property type="entry name" value="Hsp33 domain"/>
    <property type="match status" value="1"/>
</dbReference>
<dbReference type="SUPFAM" id="SSF118352">
    <property type="entry name" value="HSP33 redox switch-like"/>
    <property type="match status" value="1"/>
</dbReference>
<evidence type="ECO:0000255" key="1">
    <source>
        <dbReference type="HAMAP-Rule" id="MF_00117"/>
    </source>
</evidence>
<organism>
    <name type="scientific">Pseudomonas fluorescens (strain Pf0-1)</name>
    <dbReference type="NCBI Taxonomy" id="205922"/>
    <lineage>
        <taxon>Bacteria</taxon>
        <taxon>Pseudomonadati</taxon>
        <taxon>Pseudomonadota</taxon>
        <taxon>Gammaproteobacteria</taxon>
        <taxon>Pseudomonadales</taxon>
        <taxon>Pseudomonadaceae</taxon>
        <taxon>Pseudomonas</taxon>
    </lineage>
</organism>
<name>HSLO_PSEPF</name>
<protein>
    <recommendedName>
        <fullName evidence="1">33 kDa chaperonin</fullName>
    </recommendedName>
    <alternativeName>
        <fullName evidence="1">Heat shock protein 33 homolog</fullName>
        <shortName evidence="1">HSP33</shortName>
    </alternativeName>
</protein>
<feature type="chain" id="PRO_0000238084" description="33 kDa chaperonin">
    <location>
        <begin position="1"/>
        <end position="300"/>
    </location>
</feature>
<feature type="disulfide bond" description="Redox-active" evidence="1">
    <location>
        <begin position="235"/>
        <end position="237"/>
    </location>
</feature>
<feature type="disulfide bond" description="Redox-active" evidence="1">
    <location>
        <begin position="269"/>
        <end position="272"/>
    </location>
</feature>
<accession>Q3KJP5</accession>
<sequence length="300" mass="33324">MTDFLDTDYTQRFIFDDSDTRGELVSLERSYAEVLAKHPYPEPVAQLLGELMAAASLLVGTLKFDGLLILQARSEGPIPLLMIECSSEREIRGLARYHAEQIPADATLGDLMPNGVLALTVDPIAGQRYQGIVDLDGETLSDCFTNYFVMSQQVGTRFKLCADGRRARGLLLQQLPADRLKDEEERAASWQHITALGNTLTADELLSLDNETVLHRLYHEEQVRLFDVQKLRFHCSCSRERSGNALVSLGLEDAQALVAEQGGQVEIDCQFCNQRYLFDAADIAQLFAGAGVETPSDTRH</sequence>
<proteinExistence type="inferred from homology"/>
<keyword id="KW-0143">Chaperone</keyword>
<keyword id="KW-0963">Cytoplasm</keyword>
<keyword id="KW-1015">Disulfide bond</keyword>
<keyword id="KW-0676">Redox-active center</keyword>
<keyword id="KW-0862">Zinc</keyword>
<gene>
    <name evidence="1" type="primary">hslO</name>
    <name type="ordered locus">Pfl01_0267</name>
</gene>
<reference key="1">
    <citation type="journal article" date="2009" name="Genome Biol.">
        <title>Genomic and genetic analyses of diversity and plant interactions of Pseudomonas fluorescens.</title>
        <authorList>
            <person name="Silby M.W."/>
            <person name="Cerdeno-Tarraga A.M."/>
            <person name="Vernikos G.S."/>
            <person name="Giddens S.R."/>
            <person name="Jackson R.W."/>
            <person name="Preston G.M."/>
            <person name="Zhang X.-X."/>
            <person name="Moon C.D."/>
            <person name="Gehrig S.M."/>
            <person name="Godfrey S.A.C."/>
            <person name="Knight C.G."/>
            <person name="Malone J.G."/>
            <person name="Robinson Z."/>
            <person name="Spiers A.J."/>
            <person name="Harris S."/>
            <person name="Challis G.L."/>
            <person name="Yaxley A.M."/>
            <person name="Harris D."/>
            <person name="Seeger K."/>
            <person name="Murphy L."/>
            <person name="Rutter S."/>
            <person name="Squares R."/>
            <person name="Quail M.A."/>
            <person name="Saunders E."/>
            <person name="Mavromatis K."/>
            <person name="Brettin T.S."/>
            <person name="Bentley S.D."/>
            <person name="Hothersall J."/>
            <person name="Stephens E."/>
            <person name="Thomas C.M."/>
            <person name="Parkhill J."/>
            <person name="Levy S.B."/>
            <person name="Rainey P.B."/>
            <person name="Thomson N.R."/>
        </authorList>
    </citation>
    <scope>NUCLEOTIDE SEQUENCE [LARGE SCALE GENOMIC DNA]</scope>
    <source>
        <strain>Pf0-1</strain>
    </source>
</reference>